<accession>Q8NIQ8</accession>
<protein>
    <recommendedName>
        <fullName>Histone H4.2</fullName>
    </recommendedName>
</protein>
<comment type="function">
    <text>Core component of nucleosome. Nucleosomes wrap and compact DNA into chromatin, limiting DNA accessibility to the cellular machineries which require DNA as a template. Histones thereby play a central role in transcription regulation, DNA repair, DNA replication and chromosomal stability. DNA accessibility is regulated via a complex set of post-translational modifications of histones, also called histone code, and nucleosome remodeling.</text>
</comment>
<comment type="subunit">
    <text>The nucleosome is a histone octamer containing two molecules each of H2A, H2B, H3 and H4 assembled in one H3-H4 heterotetramer and two H2A-H2B heterodimers. The octamer wraps approximately 147 bp of DNA.</text>
</comment>
<comment type="subcellular location">
    <subcellularLocation>
        <location evidence="1">Nucleus</location>
    </subcellularLocation>
    <subcellularLocation>
        <location evidence="1">Chromosome</location>
    </subcellularLocation>
</comment>
<comment type="PTM">
    <text evidence="2">Glutarylation at Lys-92 (H4K91glu) destabilizes nucleosomes by promoting dissociation of the H2A-H2B dimers from nucleosomes.</text>
</comment>
<comment type="similarity">
    <text evidence="5">Belongs to the histone H4 family.</text>
</comment>
<organism>
    <name type="scientific">Talaromyces funiculosus</name>
    <name type="common">Fruitlet core rot fungus</name>
    <name type="synonym">Penicillium funiculosum</name>
    <dbReference type="NCBI Taxonomy" id="28572"/>
    <lineage>
        <taxon>Eukaryota</taxon>
        <taxon>Fungi</taxon>
        <taxon>Dikarya</taxon>
        <taxon>Ascomycota</taxon>
        <taxon>Pezizomycotina</taxon>
        <taxon>Eurotiomycetes</taxon>
        <taxon>Eurotiomycetidae</taxon>
        <taxon>Eurotiales</taxon>
        <taxon>Trichocomaceae</taxon>
        <taxon>Talaromyces</taxon>
        <taxon>Talaromyces sect. Talaromyces</taxon>
    </lineage>
</organism>
<reference key="1">
    <citation type="journal article" date="2002" name="Appl. Microbiol. Biotechnol.">
        <title>Use of a histone H4 promoter to drive expression of homologous and heterologous proteins in Penicillium funiculosum.</title>
        <authorList>
            <person name="Belshaw N.J."/>
            <person name="Haigh N.P."/>
            <person name="Fish N.M."/>
            <person name="Archer D.B."/>
            <person name="Alcocer M.J.C."/>
        </authorList>
    </citation>
    <scope>NUCLEOTIDE SEQUENCE [GENOMIC DNA]</scope>
    <source>
        <strain>IMI 134756</strain>
    </source>
</reference>
<feature type="initiator methionine" description="Removed" evidence="1">
    <location>
        <position position="1"/>
    </location>
</feature>
<feature type="chain" id="PRO_0000158344" description="Histone H4.2">
    <location>
        <begin position="2"/>
        <end position="103"/>
    </location>
</feature>
<feature type="DNA-binding region">
    <location>
        <begin position="17"/>
        <end position="21"/>
    </location>
</feature>
<feature type="region of interest" description="Disordered" evidence="4">
    <location>
        <begin position="1"/>
        <end position="20"/>
    </location>
</feature>
<feature type="compositionally biased region" description="Gly residues" evidence="4">
    <location>
        <begin position="1"/>
        <end position="14"/>
    </location>
</feature>
<feature type="modified residue" description="N6-acetyl-N6-methyllysine; alternate" evidence="3">
    <location>
        <position position="6"/>
    </location>
</feature>
<feature type="modified residue" description="N6-methyllysine; alternate" evidence="2">
    <location>
        <position position="6"/>
    </location>
</feature>
<feature type="modified residue" description="N6-methyllysine; alternate" evidence="2">
    <location>
        <position position="9"/>
    </location>
</feature>
<feature type="modified residue" description="N6-acetyl-N6-methyllysine; alternate" evidence="3">
    <location>
        <position position="13"/>
    </location>
</feature>
<feature type="modified residue" description="N6-methyllysine; alternate" evidence="2">
    <location>
        <position position="13"/>
    </location>
</feature>
<feature type="modified residue" description="N6-glutaryllysine" evidence="2">
    <location>
        <position position="92"/>
    </location>
</feature>
<gene>
    <name type="primary">H4.2</name>
</gene>
<name>H42_TALFU</name>
<proteinExistence type="inferred from homology"/>
<evidence type="ECO:0000250" key="1"/>
<evidence type="ECO:0000250" key="2">
    <source>
        <dbReference type="UniProtKB" id="P02309"/>
    </source>
</evidence>
<evidence type="ECO:0000250" key="3">
    <source>
        <dbReference type="UniProtKB" id="P62805"/>
    </source>
</evidence>
<evidence type="ECO:0000256" key="4">
    <source>
        <dbReference type="SAM" id="MobiDB-lite"/>
    </source>
</evidence>
<evidence type="ECO:0000305" key="5"/>
<sequence>MTGRGKGGKGLGKGGAKRHRKILRDNIQGITKPAIRRLARRGGVKRISAMIYEETRGVLKSFLESVIRDAVTYTEHAKRKTVTSLDVVYALKRQGRTLYGFGG</sequence>
<keyword id="KW-0007">Acetylation</keyword>
<keyword id="KW-0158">Chromosome</keyword>
<keyword id="KW-0238">DNA-binding</keyword>
<keyword id="KW-0488">Methylation</keyword>
<keyword id="KW-0544">Nucleosome core</keyword>
<keyword id="KW-0539">Nucleus</keyword>
<dbReference type="EMBL" id="AJ314854">
    <property type="protein sequence ID" value="CAC85654.1"/>
    <property type="molecule type" value="Genomic_DNA"/>
</dbReference>
<dbReference type="SMR" id="Q8NIQ8"/>
<dbReference type="GO" id="GO:0000786">
    <property type="term" value="C:nucleosome"/>
    <property type="evidence" value="ECO:0007669"/>
    <property type="project" value="UniProtKB-KW"/>
</dbReference>
<dbReference type="GO" id="GO:0005634">
    <property type="term" value="C:nucleus"/>
    <property type="evidence" value="ECO:0007669"/>
    <property type="project" value="UniProtKB-SubCell"/>
</dbReference>
<dbReference type="GO" id="GO:0003677">
    <property type="term" value="F:DNA binding"/>
    <property type="evidence" value="ECO:0007669"/>
    <property type="project" value="UniProtKB-KW"/>
</dbReference>
<dbReference type="GO" id="GO:0046982">
    <property type="term" value="F:protein heterodimerization activity"/>
    <property type="evidence" value="ECO:0007669"/>
    <property type="project" value="InterPro"/>
</dbReference>
<dbReference type="GO" id="GO:0030527">
    <property type="term" value="F:structural constituent of chromatin"/>
    <property type="evidence" value="ECO:0007669"/>
    <property type="project" value="InterPro"/>
</dbReference>
<dbReference type="CDD" id="cd22912">
    <property type="entry name" value="HFD_H4"/>
    <property type="match status" value="1"/>
</dbReference>
<dbReference type="FunFam" id="1.10.20.10:FF:000007">
    <property type="entry name" value="Histone H4"/>
    <property type="match status" value="1"/>
</dbReference>
<dbReference type="Gene3D" id="1.10.20.10">
    <property type="entry name" value="Histone, subunit A"/>
    <property type="match status" value="1"/>
</dbReference>
<dbReference type="InterPro" id="IPR035425">
    <property type="entry name" value="CENP-T/H4_C"/>
</dbReference>
<dbReference type="InterPro" id="IPR009072">
    <property type="entry name" value="Histone-fold"/>
</dbReference>
<dbReference type="InterPro" id="IPR001951">
    <property type="entry name" value="Histone_H4"/>
</dbReference>
<dbReference type="InterPro" id="IPR019809">
    <property type="entry name" value="Histone_H4_CS"/>
</dbReference>
<dbReference type="PANTHER" id="PTHR10484">
    <property type="entry name" value="HISTONE H4"/>
    <property type="match status" value="1"/>
</dbReference>
<dbReference type="Pfam" id="PF15511">
    <property type="entry name" value="CENP-T_C"/>
    <property type="match status" value="1"/>
</dbReference>
<dbReference type="PRINTS" id="PR00623">
    <property type="entry name" value="HISTONEH4"/>
</dbReference>
<dbReference type="SMART" id="SM00417">
    <property type="entry name" value="H4"/>
    <property type="match status" value="1"/>
</dbReference>
<dbReference type="SUPFAM" id="SSF47113">
    <property type="entry name" value="Histone-fold"/>
    <property type="match status" value="1"/>
</dbReference>
<dbReference type="PROSITE" id="PS00047">
    <property type="entry name" value="HISTONE_H4"/>
    <property type="match status" value="1"/>
</dbReference>